<protein>
    <recommendedName>
        <fullName evidence="1">Probable endonuclease 4</fullName>
        <ecNumber evidence="1">3.1.21.2</ecNumber>
    </recommendedName>
    <alternativeName>
        <fullName evidence="1">Endodeoxyribonuclease IV</fullName>
    </alternativeName>
    <alternativeName>
        <fullName evidence="1">Endonuclease IV</fullName>
    </alternativeName>
</protein>
<gene>
    <name evidence="1" type="primary">nfo</name>
    <name type="ordered locus">USA300HOU_1559</name>
</gene>
<feature type="chain" id="PRO_1000076811" description="Probable endonuclease 4">
    <location>
        <begin position="1"/>
        <end position="296"/>
    </location>
</feature>
<feature type="binding site" evidence="1">
    <location>
        <position position="68"/>
    </location>
    <ligand>
        <name>Zn(2+)</name>
        <dbReference type="ChEBI" id="CHEBI:29105"/>
        <label>1</label>
    </ligand>
</feature>
<feature type="binding site" evidence="1">
    <location>
        <position position="109"/>
    </location>
    <ligand>
        <name>Zn(2+)</name>
        <dbReference type="ChEBI" id="CHEBI:29105"/>
        <label>1</label>
    </ligand>
</feature>
<feature type="binding site" evidence="1">
    <location>
        <position position="144"/>
    </location>
    <ligand>
        <name>Zn(2+)</name>
        <dbReference type="ChEBI" id="CHEBI:29105"/>
        <label>1</label>
    </ligand>
</feature>
<feature type="binding site" evidence="1">
    <location>
        <position position="144"/>
    </location>
    <ligand>
        <name>Zn(2+)</name>
        <dbReference type="ChEBI" id="CHEBI:29105"/>
        <label>2</label>
    </ligand>
</feature>
<feature type="binding site" evidence="1">
    <location>
        <position position="178"/>
    </location>
    <ligand>
        <name>Zn(2+)</name>
        <dbReference type="ChEBI" id="CHEBI:29105"/>
        <label>2</label>
    </ligand>
</feature>
<feature type="binding site" evidence="1">
    <location>
        <position position="181"/>
    </location>
    <ligand>
        <name>Zn(2+)</name>
        <dbReference type="ChEBI" id="CHEBI:29105"/>
        <label>3</label>
    </ligand>
</feature>
<feature type="binding site" evidence="1">
    <location>
        <position position="213"/>
    </location>
    <ligand>
        <name>Zn(2+)</name>
        <dbReference type="ChEBI" id="CHEBI:29105"/>
        <label>2</label>
    </ligand>
</feature>
<feature type="binding site" evidence="1">
    <location>
        <position position="226"/>
    </location>
    <ligand>
        <name>Zn(2+)</name>
        <dbReference type="ChEBI" id="CHEBI:29105"/>
        <label>3</label>
    </ligand>
</feature>
<feature type="binding site" evidence="1">
    <location>
        <position position="228"/>
    </location>
    <ligand>
        <name>Zn(2+)</name>
        <dbReference type="ChEBI" id="CHEBI:29105"/>
        <label>3</label>
    </ligand>
</feature>
<feature type="binding site" evidence="1">
    <location>
        <position position="258"/>
    </location>
    <ligand>
        <name>Zn(2+)</name>
        <dbReference type="ChEBI" id="CHEBI:29105"/>
        <label>2</label>
    </ligand>
</feature>
<accession>A8Z497</accession>
<proteinExistence type="inferred from homology"/>
<dbReference type="EC" id="3.1.21.2" evidence="1"/>
<dbReference type="EMBL" id="CP000730">
    <property type="protein sequence ID" value="ABX29566.1"/>
    <property type="molecule type" value="Genomic_DNA"/>
</dbReference>
<dbReference type="RefSeq" id="WP_000924214.1">
    <property type="nucleotide sequence ID" value="NC_010079.1"/>
</dbReference>
<dbReference type="SMR" id="A8Z497"/>
<dbReference type="KEGG" id="sax:USA300HOU_1559"/>
<dbReference type="HOGENOM" id="CLU_025885_4_1_9"/>
<dbReference type="GO" id="GO:0008833">
    <property type="term" value="F:deoxyribonuclease IV (phage-T4-induced) activity"/>
    <property type="evidence" value="ECO:0007669"/>
    <property type="project" value="UniProtKB-UniRule"/>
</dbReference>
<dbReference type="GO" id="GO:0003677">
    <property type="term" value="F:DNA binding"/>
    <property type="evidence" value="ECO:0007669"/>
    <property type="project" value="InterPro"/>
</dbReference>
<dbReference type="GO" id="GO:0003906">
    <property type="term" value="F:DNA-(apurinic or apyrimidinic site) endonuclease activity"/>
    <property type="evidence" value="ECO:0007669"/>
    <property type="project" value="TreeGrafter"/>
</dbReference>
<dbReference type="GO" id="GO:0008081">
    <property type="term" value="F:phosphoric diester hydrolase activity"/>
    <property type="evidence" value="ECO:0007669"/>
    <property type="project" value="TreeGrafter"/>
</dbReference>
<dbReference type="GO" id="GO:0008270">
    <property type="term" value="F:zinc ion binding"/>
    <property type="evidence" value="ECO:0007669"/>
    <property type="project" value="UniProtKB-UniRule"/>
</dbReference>
<dbReference type="GO" id="GO:0006284">
    <property type="term" value="P:base-excision repair"/>
    <property type="evidence" value="ECO:0007669"/>
    <property type="project" value="TreeGrafter"/>
</dbReference>
<dbReference type="CDD" id="cd00019">
    <property type="entry name" value="AP2Ec"/>
    <property type="match status" value="1"/>
</dbReference>
<dbReference type="FunFam" id="3.20.20.150:FF:000001">
    <property type="entry name" value="Probable endonuclease 4"/>
    <property type="match status" value="1"/>
</dbReference>
<dbReference type="Gene3D" id="3.20.20.150">
    <property type="entry name" value="Divalent-metal-dependent TIM barrel enzymes"/>
    <property type="match status" value="1"/>
</dbReference>
<dbReference type="HAMAP" id="MF_00152">
    <property type="entry name" value="Nfo"/>
    <property type="match status" value="1"/>
</dbReference>
<dbReference type="InterPro" id="IPR001719">
    <property type="entry name" value="AP_endonuc_2"/>
</dbReference>
<dbReference type="InterPro" id="IPR018246">
    <property type="entry name" value="AP_endonuc_F2_Zn_BS"/>
</dbReference>
<dbReference type="InterPro" id="IPR036237">
    <property type="entry name" value="Xyl_isomerase-like_sf"/>
</dbReference>
<dbReference type="InterPro" id="IPR013022">
    <property type="entry name" value="Xyl_isomerase-like_TIM-brl"/>
</dbReference>
<dbReference type="NCBIfam" id="TIGR00587">
    <property type="entry name" value="nfo"/>
    <property type="match status" value="1"/>
</dbReference>
<dbReference type="NCBIfam" id="NF002196">
    <property type="entry name" value="PRK01060.1-1"/>
    <property type="match status" value="1"/>
</dbReference>
<dbReference type="PANTHER" id="PTHR21445:SF0">
    <property type="entry name" value="APURINIC-APYRIMIDINIC ENDONUCLEASE"/>
    <property type="match status" value="1"/>
</dbReference>
<dbReference type="PANTHER" id="PTHR21445">
    <property type="entry name" value="ENDONUCLEASE IV ENDODEOXYRIBONUCLEASE IV"/>
    <property type="match status" value="1"/>
</dbReference>
<dbReference type="Pfam" id="PF01261">
    <property type="entry name" value="AP_endonuc_2"/>
    <property type="match status" value="1"/>
</dbReference>
<dbReference type="SMART" id="SM00518">
    <property type="entry name" value="AP2Ec"/>
    <property type="match status" value="1"/>
</dbReference>
<dbReference type="SUPFAM" id="SSF51658">
    <property type="entry name" value="Xylose isomerase-like"/>
    <property type="match status" value="1"/>
</dbReference>
<dbReference type="PROSITE" id="PS00729">
    <property type="entry name" value="AP_NUCLEASE_F2_1"/>
    <property type="match status" value="1"/>
</dbReference>
<dbReference type="PROSITE" id="PS00730">
    <property type="entry name" value="AP_NUCLEASE_F2_2"/>
    <property type="match status" value="1"/>
</dbReference>
<dbReference type="PROSITE" id="PS00731">
    <property type="entry name" value="AP_NUCLEASE_F2_3"/>
    <property type="match status" value="1"/>
</dbReference>
<dbReference type="PROSITE" id="PS51432">
    <property type="entry name" value="AP_NUCLEASE_F2_4"/>
    <property type="match status" value="1"/>
</dbReference>
<organism>
    <name type="scientific">Staphylococcus aureus (strain USA300 / TCH1516)</name>
    <dbReference type="NCBI Taxonomy" id="451516"/>
    <lineage>
        <taxon>Bacteria</taxon>
        <taxon>Bacillati</taxon>
        <taxon>Bacillota</taxon>
        <taxon>Bacilli</taxon>
        <taxon>Bacillales</taxon>
        <taxon>Staphylococcaceae</taxon>
        <taxon>Staphylococcus</taxon>
    </lineage>
</organism>
<evidence type="ECO:0000255" key="1">
    <source>
        <dbReference type="HAMAP-Rule" id="MF_00152"/>
    </source>
</evidence>
<comment type="function">
    <text evidence="1">Endonuclease IV plays a role in DNA repair. It cleaves phosphodiester bonds at apurinic or apyrimidinic (AP) sites, generating a 3'-hydroxyl group and a 5'-terminal sugar phosphate.</text>
</comment>
<comment type="catalytic activity">
    <reaction evidence="1">
        <text>Endonucleolytic cleavage to 5'-phosphooligonucleotide end-products.</text>
        <dbReference type="EC" id="3.1.21.2"/>
    </reaction>
</comment>
<comment type="cofactor">
    <cofactor evidence="1">
        <name>Zn(2+)</name>
        <dbReference type="ChEBI" id="CHEBI:29105"/>
    </cofactor>
    <text evidence="1">Binds 3 Zn(2+) ions.</text>
</comment>
<comment type="similarity">
    <text evidence="1">Belongs to the AP endonuclease 2 family.</text>
</comment>
<reference key="1">
    <citation type="journal article" date="2007" name="BMC Microbiol.">
        <title>Subtle genetic changes enhance virulence of methicillin resistant and sensitive Staphylococcus aureus.</title>
        <authorList>
            <person name="Highlander S.K."/>
            <person name="Hulten K.G."/>
            <person name="Qin X."/>
            <person name="Jiang H."/>
            <person name="Yerrapragada S."/>
            <person name="Mason E.O. Jr."/>
            <person name="Shang Y."/>
            <person name="Williams T.M."/>
            <person name="Fortunov R.M."/>
            <person name="Liu Y."/>
            <person name="Igboeli O."/>
            <person name="Petrosino J."/>
            <person name="Tirumalai M."/>
            <person name="Uzman A."/>
            <person name="Fox G.E."/>
            <person name="Cardenas A.M."/>
            <person name="Muzny D.M."/>
            <person name="Hemphill L."/>
            <person name="Ding Y."/>
            <person name="Dugan S."/>
            <person name="Blyth P.R."/>
            <person name="Buhay C.J."/>
            <person name="Dinh H.H."/>
            <person name="Hawes A.C."/>
            <person name="Holder M."/>
            <person name="Kovar C.L."/>
            <person name="Lee S.L."/>
            <person name="Liu W."/>
            <person name="Nazareth L.V."/>
            <person name="Wang Q."/>
            <person name="Zhou J."/>
            <person name="Kaplan S.L."/>
            <person name="Weinstock G.M."/>
        </authorList>
    </citation>
    <scope>NUCLEOTIDE SEQUENCE [LARGE SCALE GENOMIC DNA]</scope>
    <source>
        <strain>USA300 / TCH1516</strain>
    </source>
</reference>
<keyword id="KW-0227">DNA damage</keyword>
<keyword id="KW-0234">DNA repair</keyword>
<keyword id="KW-0255">Endonuclease</keyword>
<keyword id="KW-0378">Hydrolase</keyword>
<keyword id="KW-0479">Metal-binding</keyword>
<keyword id="KW-0540">Nuclease</keyword>
<keyword id="KW-0862">Zinc</keyword>
<name>END4_STAAT</name>
<sequence>MLLGSHVSMSGKKMLEGSAIEAHEYGETTFMIYTGAPQNTRRKSIEDLNITKGHEVMEKYGLSNIVVHAPYIINIANTTKPETFNLGVDFLQQEIERTQAIGAKDIVLHPGAHVGAGVDAGINKIIEGLNEVLTNDNNVRIALETMAGKGTEIGRSFEELARIIDGVHNNERLSVCFDTCHTHDAGYNVKEDFDGVLNEFDKIIGVDRIKVVHVNDSKNDRGAQKDRHENIGFGYIGFDALNYIVHHDSFKDIPKILETPYVGEDKKNKKPPYKLEIEMLKQQQFDPELKNKVMQQ</sequence>